<dbReference type="EMBL" id="DQ875051">
    <property type="protein sequence ID" value="ABI47945.1"/>
    <property type="molecule type" value="Other_RNA"/>
</dbReference>
<dbReference type="SMR" id="Q0GBX6"/>
<dbReference type="GlyCosmos" id="Q0GBX6">
    <property type="glycosylation" value="3 sites, No reported glycans"/>
</dbReference>
<dbReference type="Proteomes" id="UP000008618">
    <property type="component" value="Genome"/>
</dbReference>
<dbReference type="GO" id="GO:0016020">
    <property type="term" value="C:membrane"/>
    <property type="evidence" value="ECO:0007669"/>
    <property type="project" value="UniProtKB-KW"/>
</dbReference>
<dbReference type="GO" id="GO:0019031">
    <property type="term" value="C:viral envelope"/>
    <property type="evidence" value="ECO:0007669"/>
    <property type="project" value="UniProtKB-KW"/>
</dbReference>
<dbReference type="GO" id="GO:0036338">
    <property type="term" value="C:viral membrane"/>
    <property type="evidence" value="ECO:0000250"/>
    <property type="project" value="UniProtKB"/>
</dbReference>
<dbReference type="GO" id="GO:0055036">
    <property type="term" value="C:virion membrane"/>
    <property type="evidence" value="ECO:0007669"/>
    <property type="project" value="UniProtKB-SubCell"/>
</dbReference>
<dbReference type="GO" id="GO:0098670">
    <property type="term" value="P:entry receptor-mediated virion attachment to host cell"/>
    <property type="evidence" value="ECO:0000250"/>
    <property type="project" value="UniProtKB"/>
</dbReference>
<dbReference type="GO" id="GO:0039654">
    <property type="term" value="P:fusion of virus membrane with host endosome membrane"/>
    <property type="evidence" value="ECO:0000250"/>
    <property type="project" value="UniProtKB"/>
</dbReference>
<dbReference type="Gene3D" id="2.30.29.130">
    <property type="match status" value="1"/>
</dbReference>
<dbReference type="InterPro" id="IPR055448">
    <property type="entry name" value="PH_Rhabdo_glycop"/>
</dbReference>
<dbReference type="InterPro" id="IPR055447">
    <property type="entry name" value="Rhabdo_glycop_CD"/>
</dbReference>
<dbReference type="InterPro" id="IPR001903">
    <property type="entry name" value="Rhabdo_glycop_FD"/>
</dbReference>
<dbReference type="Pfam" id="PF24834">
    <property type="entry name" value="PH_Rhabdo_glycop"/>
    <property type="match status" value="1"/>
</dbReference>
<dbReference type="Pfam" id="PF24833">
    <property type="entry name" value="Rhabdo_glycop_CD"/>
    <property type="match status" value="1"/>
</dbReference>
<dbReference type="Pfam" id="PF00974">
    <property type="entry name" value="Rhabdo_glycop_FD"/>
    <property type="match status" value="1"/>
</dbReference>
<dbReference type="SUPFAM" id="SSF161008">
    <property type="entry name" value="Viral glycoprotein ectodomain-like"/>
    <property type="match status" value="1"/>
</dbReference>
<reference key="1">
    <citation type="submission" date="2006-08" db="EMBL/GenBank/DDBJ databases">
        <authorList>
            <person name="Zhao Y.J."/>
            <person name="Guo L."/>
            <person name="Huang Y."/>
            <person name="Qian A.D."/>
        </authorList>
    </citation>
    <scope>NUCLEOTIDE SEQUENCE [GENOMIC RNA]</scope>
</reference>
<accession>Q0GBX6</accession>
<gene>
    <name type="primary">G</name>
</gene>
<feature type="signal peptide" evidence="3">
    <location>
        <begin position="1"/>
        <end position="19"/>
    </location>
</feature>
<feature type="chain" id="PRO_0000295800" description="Glycoprotein">
    <location>
        <begin position="20"/>
        <end position="524"/>
    </location>
</feature>
<feature type="topological domain" description="Virion surface" evidence="3">
    <location>
        <begin position="20"/>
        <end position="459"/>
    </location>
</feature>
<feature type="transmembrane region" description="Helical" evidence="3">
    <location>
        <begin position="460"/>
        <end position="480"/>
    </location>
</feature>
<feature type="topological domain" description="Intravirion" evidence="3">
    <location>
        <begin position="481"/>
        <end position="524"/>
    </location>
</feature>
<feature type="region of interest" description="Disordered" evidence="4">
    <location>
        <begin position="488"/>
        <end position="524"/>
    </location>
</feature>
<feature type="compositionally biased region" description="Polar residues" evidence="4">
    <location>
        <begin position="489"/>
        <end position="507"/>
    </location>
</feature>
<feature type="lipid moiety-binding region" description="S-palmitoyl cysteine; by host" evidence="1">
    <location>
        <position position="480"/>
    </location>
</feature>
<feature type="glycosylation site" description="N-linked (GlcNAc...) asparagine; by host" evidence="1">
    <location>
        <position position="56"/>
    </location>
</feature>
<feature type="glycosylation site" description="N-linked (GlcNAc...) asparagine; by host" evidence="1">
    <location>
        <position position="266"/>
    </location>
</feature>
<feature type="glycosylation site" description="N-linked (GlcNAc...) asparagine; by host" evidence="1">
    <location>
        <position position="338"/>
    </location>
</feature>
<feature type="disulfide bond" evidence="2">
    <location>
        <begin position="43"/>
        <end position="302"/>
    </location>
</feature>
<feature type="disulfide bond" evidence="2">
    <location>
        <begin position="54"/>
        <end position="226"/>
    </location>
</feature>
<feature type="disulfide bond" evidence="2">
    <location>
        <begin position="178"/>
        <end position="188"/>
    </location>
</feature>
<feature type="disulfide bond" evidence="2">
    <location>
        <begin position="208"/>
        <end position="247"/>
    </location>
</feature>
<feature type="disulfide bond" evidence="2">
    <location>
        <begin position="242"/>
        <end position="271"/>
    </location>
</feature>
<feature type="disulfide bond" evidence="2">
    <location>
        <begin position="363"/>
        <end position="370"/>
    </location>
</feature>
<protein>
    <recommendedName>
        <fullName>Glycoprotein</fullName>
    </recommendedName>
</protein>
<name>GLYCO_RABVD</name>
<sequence>MVPQALLLVPLLGFSLCFGKFPIYTIPTKLGPWSPIDIHHLSCPNNLVVEDEGCTNLSGFSYMELKVGRISAIKVNGFTCTGVVTEAETYTNFVGYVTTTFKRKHFRPMPGCMYSRVQLEDGRSPQIEESLHNPYPDYHWLRTVRTTKESLIIISPSVTDLDPYDKSLHSRVFPGRKCSGITVSSTYCSTNHDYTVWMPEILRLGTSCDIFTNSRGKRASKGSKTCGFVDERGLYKSLKGACKLKLCGVPGLRLMDGTWVAMQTSNETKWCPPGQLVNLHDLHSDEIEHLVVEELVKKREECLDALESITTTKSVSFRRLSHLRKLVPGFGKAYTIFNKTLMEAEAHYKSVRTWNEIIPSKGCLRVGGGCHPHVNGVFFNGIILGPDGHVLIPEMQSSLLQQHIELLESSVIPLMHPLADPFTVFKDGDEIEDFVEVHLPDVHEQVSGVDLGLPNWGEYVLLSAGTLIALMLIIFLITCCKRVDRPESTQRSLRGTGRNVSVTSQSGKFIPSRESYKSGGETGL</sequence>
<proteinExistence type="evidence at protein level"/>
<keyword id="KW-1015">Disulfide bond</keyword>
<keyword id="KW-0325">Glycoprotein</keyword>
<keyword id="KW-0449">Lipoprotein</keyword>
<keyword id="KW-0472">Membrane</keyword>
<keyword id="KW-0564">Palmitate</keyword>
<keyword id="KW-0732">Signal</keyword>
<keyword id="KW-0812">Transmembrane</keyword>
<keyword id="KW-1133">Transmembrane helix</keyword>
<keyword id="KW-0261">Viral envelope protein</keyword>
<keyword id="KW-0946">Virion</keyword>
<organism>
    <name type="scientific">Rabies virus (strain China/DRV)</name>
    <name type="common">RABV</name>
    <dbReference type="NCBI Taxonomy" id="445792"/>
    <lineage>
        <taxon>Viruses</taxon>
        <taxon>Riboviria</taxon>
        <taxon>Orthornavirae</taxon>
        <taxon>Negarnaviricota</taxon>
        <taxon>Haploviricotina</taxon>
        <taxon>Monjiviricetes</taxon>
        <taxon>Mononegavirales</taxon>
        <taxon>Rhabdoviridae</taxon>
        <taxon>Alpharhabdovirinae</taxon>
        <taxon>Lyssavirus</taxon>
        <taxon>Lyssavirus rabies</taxon>
    </lineage>
</organism>
<evidence type="ECO:0000250" key="1"/>
<evidence type="ECO:0000250" key="2">
    <source>
        <dbReference type="UniProtKB" id="P08667"/>
    </source>
</evidence>
<evidence type="ECO:0000255" key="3"/>
<evidence type="ECO:0000256" key="4">
    <source>
        <dbReference type="SAM" id="MobiDB-lite"/>
    </source>
</evidence>
<evidence type="ECO:0000305" key="5"/>
<organismHost>
    <name type="scientific">Homo sapiens</name>
    <name type="common">Human</name>
    <dbReference type="NCBI Taxonomy" id="9606"/>
</organismHost>
<organismHost>
    <name type="scientific">Mammalia</name>
    <dbReference type="NCBI Taxonomy" id="40674"/>
</organismHost>
<comment type="function">
    <text evidence="1 2">Attaches the virus to host cellular receptor, inducing endocytosis of the virion by using different host proteins including TFRC, GRM2 and ITGB1 (By similarity). In the endosome, the acidic pH induces conformational changes in the glycoprotein trimer, which trigger fusion between virus and cell membrane. There is convincing in vitro evidence that the muscular form of the nicotinic acetylcholine receptor (nAChR), the neuronal cell adhesion molecule (NCAM), and the p75 neurotrophin receptor (p75NTR) bind glycoprotein and thereby facilitate rabies virus entry into cells (By similarity).</text>
</comment>
<comment type="subunit">
    <text evidence="1 2">Homotrimer (By similarity). Interacts with matrix protein (By similarity). Interacts with host TRFC. Interacts with host BST2; this interaction inhibits viral budding by tethering new virions to the cell surface. Interacts with ITGB1. Interacts with host GRM2 (By similarity).</text>
</comment>
<comment type="subcellular location">
    <subcellularLocation>
        <location evidence="5">Virion membrane</location>
        <topology evidence="5">Single-pass type I membrane protein</topology>
    </subcellularLocation>
</comment>
<comment type="PTM">
    <text evidence="1">Glycosylated and palmitoylated by host. Glycosylation is crucial for glycoprotein export at the cell surface (By similarity).</text>
</comment>
<comment type="biotechnology">
    <text>Primary surface antigen capable of inducing and reacting with virus-neutralizing antibodies. Almost all human and veterinary vaccines are based on the functional aspects of the G protein.</text>
</comment>
<comment type="miscellaneous">
    <text evidence="1">Arg-352 is highly involved in rabies virus pathogenicity. Its mutation dramatically attenuates the virus (By similarity).</text>
</comment>
<comment type="similarity">
    <text evidence="5">Belongs to the lyssavirus glycoprotein family.</text>
</comment>